<reference key="1">
    <citation type="submission" date="1998-10" db="EMBL/GenBank/DDBJ databases">
        <title>The heat shock gene hsp68 of D. melanogaster.</title>
        <authorList>
            <person name="McColl G."/>
            <person name="McKechnie S.W."/>
        </authorList>
    </citation>
    <scope>NUCLEOTIDE SEQUENCE [GENOMIC DNA]</scope>
</reference>
<reference key="2">
    <citation type="journal article" date="2000" name="Science">
        <title>The genome sequence of Drosophila melanogaster.</title>
        <authorList>
            <person name="Adams M.D."/>
            <person name="Celniker S.E."/>
            <person name="Holt R.A."/>
            <person name="Evans C.A."/>
            <person name="Gocayne J.D."/>
            <person name="Amanatides P.G."/>
            <person name="Scherer S.E."/>
            <person name="Li P.W."/>
            <person name="Hoskins R.A."/>
            <person name="Galle R.F."/>
            <person name="George R.A."/>
            <person name="Lewis S.E."/>
            <person name="Richards S."/>
            <person name="Ashburner M."/>
            <person name="Henderson S.N."/>
            <person name="Sutton G.G."/>
            <person name="Wortman J.R."/>
            <person name="Yandell M.D."/>
            <person name="Zhang Q."/>
            <person name="Chen L.X."/>
            <person name="Brandon R.C."/>
            <person name="Rogers Y.-H.C."/>
            <person name="Blazej R.G."/>
            <person name="Champe M."/>
            <person name="Pfeiffer B.D."/>
            <person name="Wan K.H."/>
            <person name="Doyle C."/>
            <person name="Baxter E.G."/>
            <person name="Helt G."/>
            <person name="Nelson C.R."/>
            <person name="Miklos G.L.G."/>
            <person name="Abril J.F."/>
            <person name="Agbayani A."/>
            <person name="An H.-J."/>
            <person name="Andrews-Pfannkoch C."/>
            <person name="Baldwin D."/>
            <person name="Ballew R.M."/>
            <person name="Basu A."/>
            <person name="Baxendale J."/>
            <person name="Bayraktaroglu L."/>
            <person name="Beasley E.M."/>
            <person name="Beeson K.Y."/>
            <person name="Benos P.V."/>
            <person name="Berman B.P."/>
            <person name="Bhandari D."/>
            <person name="Bolshakov S."/>
            <person name="Borkova D."/>
            <person name="Botchan M.R."/>
            <person name="Bouck J."/>
            <person name="Brokstein P."/>
            <person name="Brottier P."/>
            <person name="Burtis K.C."/>
            <person name="Busam D.A."/>
            <person name="Butler H."/>
            <person name="Cadieu E."/>
            <person name="Center A."/>
            <person name="Chandra I."/>
            <person name="Cherry J.M."/>
            <person name="Cawley S."/>
            <person name="Dahlke C."/>
            <person name="Davenport L.B."/>
            <person name="Davies P."/>
            <person name="de Pablos B."/>
            <person name="Delcher A."/>
            <person name="Deng Z."/>
            <person name="Mays A.D."/>
            <person name="Dew I."/>
            <person name="Dietz S.M."/>
            <person name="Dodson K."/>
            <person name="Doup L.E."/>
            <person name="Downes M."/>
            <person name="Dugan-Rocha S."/>
            <person name="Dunkov B.C."/>
            <person name="Dunn P."/>
            <person name="Durbin K.J."/>
            <person name="Evangelista C.C."/>
            <person name="Ferraz C."/>
            <person name="Ferriera S."/>
            <person name="Fleischmann W."/>
            <person name="Fosler C."/>
            <person name="Gabrielian A.E."/>
            <person name="Garg N.S."/>
            <person name="Gelbart W.M."/>
            <person name="Glasser K."/>
            <person name="Glodek A."/>
            <person name="Gong F."/>
            <person name="Gorrell J.H."/>
            <person name="Gu Z."/>
            <person name="Guan P."/>
            <person name="Harris M."/>
            <person name="Harris N.L."/>
            <person name="Harvey D.A."/>
            <person name="Heiman T.J."/>
            <person name="Hernandez J.R."/>
            <person name="Houck J."/>
            <person name="Hostin D."/>
            <person name="Houston K.A."/>
            <person name="Howland T.J."/>
            <person name="Wei M.-H."/>
            <person name="Ibegwam C."/>
            <person name="Jalali M."/>
            <person name="Kalush F."/>
            <person name="Karpen G.H."/>
            <person name="Ke Z."/>
            <person name="Kennison J.A."/>
            <person name="Ketchum K.A."/>
            <person name="Kimmel B.E."/>
            <person name="Kodira C.D."/>
            <person name="Kraft C.L."/>
            <person name="Kravitz S."/>
            <person name="Kulp D."/>
            <person name="Lai Z."/>
            <person name="Lasko P."/>
            <person name="Lei Y."/>
            <person name="Levitsky A.A."/>
            <person name="Li J.H."/>
            <person name="Li Z."/>
            <person name="Liang Y."/>
            <person name="Lin X."/>
            <person name="Liu X."/>
            <person name="Mattei B."/>
            <person name="McIntosh T.C."/>
            <person name="McLeod M.P."/>
            <person name="McPherson D."/>
            <person name="Merkulov G."/>
            <person name="Milshina N.V."/>
            <person name="Mobarry C."/>
            <person name="Morris J."/>
            <person name="Moshrefi A."/>
            <person name="Mount S.M."/>
            <person name="Moy M."/>
            <person name="Murphy B."/>
            <person name="Murphy L."/>
            <person name="Muzny D.M."/>
            <person name="Nelson D.L."/>
            <person name="Nelson D.R."/>
            <person name="Nelson K.A."/>
            <person name="Nixon K."/>
            <person name="Nusskern D.R."/>
            <person name="Pacleb J.M."/>
            <person name="Palazzolo M."/>
            <person name="Pittman G.S."/>
            <person name="Pan S."/>
            <person name="Pollard J."/>
            <person name="Puri V."/>
            <person name="Reese M.G."/>
            <person name="Reinert K."/>
            <person name="Remington K."/>
            <person name="Saunders R.D.C."/>
            <person name="Scheeler F."/>
            <person name="Shen H."/>
            <person name="Shue B.C."/>
            <person name="Siden-Kiamos I."/>
            <person name="Simpson M."/>
            <person name="Skupski M.P."/>
            <person name="Smith T.J."/>
            <person name="Spier E."/>
            <person name="Spradling A.C."/>
            <person name="Stapleton M."/>
            <person name="Strong R."/>
            <person name="Sun E."/>
            <person name="Svirskas R."/>
            <person name="Tector C."/>
            <person name="Turner R."/>
            <person name="Venter E."/>
            <person name="Wang A.H."/>
            <person name="Wang X."/>
            <person name="Wang Z.-Y."/>
            <person name="Wassarman D.A."/>
            <person name="Weinstock G.M."/>
            <person name="Weissenbach J."/>
            <person name="Williams S.M."/>
            <person name="Woodage T."/>
            <person name="Worley K.C."/>
            <person name="Wu D."/>
            <person name="Yang S."/>
            <person name="Yao Q.A."/>
            <person name="Ye J."/>
            <person name="Yeh R.-F."/>
            <person name="Zaveri J.S."/>
            <person name="Zhan M."/>
            <person name="Zhang G."/>
            <person name="Zhao Q."/>
            <person name="Zheng L."/>
            <person name="Zheng X.H."/>
            <person name="Zhong F.N."/>
            <person name="Zhong W."/>
            <person name="Zhou X."/>
            <person name="Zhu S.C."/>
            <person name="Zhu X."/>
            <person name="Smith H.O."/>
            <person name="Gibbs R.A."/>
            <person name="Myers E.W."/>
            <person name="Rubin G.M."/>
            <person name="Venter J.C."/>
        </authorList>
    </citation>
    <scope>NUCLEOTIDE SEQUENCE [LARGE SCALE GENOMIC DNA]</scope>
    <source>
        <strain>Berkeley</strain>
    </source>
</reference>
<reference key="3">
    <citation type="journal article" date="2002" name="Genome Biol.">
        <title>Annotation of the Drosophila melanogaster euchromatic genome: a systematic review.</title>
        <authorList>
            <person name="Misra S."/>
            <person name="Crosby M.A."/>
            <person name="Mungall C.J."/>
            <person name="Matthews B.B."/>
            <person name="Campbell K.S."/>
            <person name="Hradecky P."/>
            <person name="Huang Y."/>
            <person name="Kaminker J.S."/>
            <person name="Millburn G.H."/>
            <person name="Prochnik S.E."/>
            <person name="Smith C.D."/>
            <person name="Tupy J.L."/>
            <person name="Whitfield E.J."/>
            <person name="Bayraktaroglu L."/>
            <person name="Berman B.P."/>
            <person name="Bettencourt B.R."/>
            <person name="Celniker S.E."/>
            <person name="de Grey A.D.N.J."/>
            <person name="Drysdale R.A."/>
            <person name="Harris N.L."/>
            <person name="Richter J."/>
            <person name="Russo S."/>
            <person name="Schroeder A.J."/>
            <person name="Shu S.Q."/>
            <person name="Stapleton M."/>
            <person name="Yamada C."/>
            <person name="Ashburner M."/>
            <person name="Gelbart W.M."/>
            <person name="Rubin G.M."/>
            <person name="Lewis S.E."/>
        </authorList>
    </citation>
    <scope>GENOME REANNOTATION</scope>
    <source>
        <strain>Berkeley</strain>
    </source>
</reference>
<reference key="4">
    <citation type="journal article" date="2002" name="Genome Biol.">
        <title>A Drosophila full-length cDNA resource.</title>
        <authorList>
            <person name="Stapleton M."/>
            <person name="Carlson J.W."/>
            <person name="Brokstein P."/>
            <person name="Yu C."/>
            <person name="Champe M."/>
            <person name="George R.A."/>
            <person name="Guarin H."/>
            <person name="Kronmiller B."/>
            <person name="Pacleb J.M."/>
            <person name="Park S."/>
            <person name="Wan K.H."/>
            <person name="Rubin G.M."/>
            <person name="Celniker S.E."/>
        </authorList>
    </citation>
    <scope>NUCLEOTIDE SEQUENCE [LARGE SCALE MRNA]</scope>
    <source>
        <strain>Berkeley</strain>
        <tissue>Embryo</tissue>
    </source>
</reference>
<reference key="5">
    <citation type="journal article" date="2008" name="J. Proteome Res.">
        <title>Phosphoproteome analysis of Drosophila melanogaster embryos.</title>
        <authorList>
            <person name="Zhai B."/>
            <person name="Villen J."/>
            <person name="Beausoleil S.A."/>
            <person name="Mintseris J."/>
            <person name="Gygi S.P."/>
        </authorList>
    </citation>
    <scope>PHOSPHORYLATION [LARGE SCALE ANALYSIS] AT THR-127</scope>
    <scope>IDENTIFICATION BY MASS SPECTROMETRY</scope>
    <source>
        <tissue>Embryo</tissue>
    </source>
</reference>
<name>HSP68_DROME</name>
<sequence length="635" mass="69744">MPAIGIDLGTTYSCVGVFQYGKVEIIANDQGNRTTPSYVAFTDSERLIGDAAKNQVAMNPKNSVFDAKRLIGRRFDDSKIQEDIKHWPFKVINDNGKPKISVEFKGANKCFSPEEISSMVLTKMKETAEAYLGTTVKDAVITVPAYFNDSQRQATKDAGAIAGINVLRIINEPTAAALAYGLDKNLKGERNVLIFDLGGGTFDVSILTIDEGSLFEVRSTAGDTHLGGEDFDNRLVNHFAEEFKRKYKKDLRSNPRALRRLRTAAERAKRTLSSSTEASLEIDALYEGHDFYSKVSRARFEELCGDLFRNTLEPVEKALKDAKMDKSQIHDIVLVGGSTRIPKVQNLLQNFFGGKTLNLSINPDEAVAYGAAIQAAILSGDKSSEIKDVLLVDVAPLSLGIETAGGVMTKLIERNSRIPCKQSKTFTTYADNQPAVTIQVFEGERALTKDNNVLGTFDLTGVPPAPRGVPKIDVTFDLDANGILNVTAKEQGTGNAKNITIKNDKGRLSQADIDRMLSEAEKYAEEDERHRQRIAARNQLETYLFGVKEAAENGGDRISAADKSSIVERCSEAMKWLDSNTTAEKEEYEYKLKELEQFCSPIMTKMHKGGGDGQQAPNFGQQAGGYKGPTVEEVD</sequence>
<keyword id="KW-0067">ATP-binding</keyword>
<keyword id="KW-0547">Nucleotide-binding</keyword>
<keyword id="KW-0597">Phosphoprotein</keyword>
<keyword id="KW-1185">Reference proteome</keyword>
<keyword id="KW-0346">Stress response</keyword>
<comment type="similarity">
    <text evidence="3">Belongs to the heat shock protein 70 family.</text>
</comment>
<accession>O97125</accession>
<dbReference type="EMBL" id="AF096275">
    <property type="protein sequence ID" value="AAD16140.1"/>
    <property type="molecule type" value="Genomic_DNA"/>
</dbReference>
<dbReference type="EMBL" id="AE014297">
    <property type="protein sequence ID" value="AAF56230.1"/>
    <property type="molecule type" value="Genomic_DNA"/>
</dbReference>
<dbReference type="EMBL" id="AY094878">
    <property type="protein sequence ID" value="AAM11231.1"/>
    <property type="molecule type" value="mRNA"/>
</dbReference>
<dbReference type="RefSeq" id="NP_524474.1">
    <property type="nucleotide sequence ID" value="NM_079750.4"/>
</dbReference>
<dbReference type="SMR" id="O97125"/>
<dbReference type="BioGRID" id="67786">
    <property type="interactions" value="20"/>
</dbReference>
<dbReference type="DIP" id="DIP-19523N"/>
<dbReference type="FunCoup" id="O97125">
    <property type="interactions" value="570"/>
</dbReference>
<dbReference type="IntAct" id="O97125">
    <property type="interactions" value="6"/>
</dbReference>
<dbReference type="STRING" id="7227.FBpp0083974"/>
<dbReference type="iPTMnet" id="O97125"/>
<dbReference type="PaxDb" id="7227-FBpp0083974"/>
<dbReference type="DNASU" id="42852"/>
<dbReference type="EnsemblMetazoa" id="FBtr0084589">
    <property type="protein sequence ID" value="FBpp0083974"/>
    <property type="gene ID" value="FBgn0001230"/>
</dbReference>
<dbReference type="GeneID" id="42852"/>
<dbReference type="KEGG" id="dme:Dmel_CG5436"/>
<dbReference type="AGR" id="FB:FBgn0001230"/>
<dbReference type="CTD" id="42852"/>
<dbReference type="FlyBase" id="FBgn0001230">
    <property type="gene designation" value="Hsp68"/>
</dbReference>
<dbReference type="VEuPathDB" id="VectorBase:FBgn0001230"/>
<dbReference type="eggNOG" id="KOG0101">
    <property type="taxonomic scope" value="Eukaryota"/>
</dbReference>
<dbReference type="GeneTree" id="ENSGT00940000154813"/>
<dbReference type="HOGENOM" id="CLU_005965_3_0_1"/>
<dbReference type="InParanoid" id="O97125"/>
<dbReference type="OMA" id="EQFCSPI"/>
<dbReference type="OrthoDB" id="2401965at2759"/>
<dbReference type="PhylomeDB" id="O97125"/>
<dbReference type="Reactome" id="R-DME-3371497">
    <property type="pathway name" value="HSP90 chaperone cycle for steroid hormone receptors (SHR) in the presence of ligand"/>
</dbReference>
<dbReference type="BioGRID-ORCS" id="42852">
    <property type="hits" value="0 hits in 1 CRISPR screen"/>
</dbReference>
<dbReference type="GenomeRNAi" id="42852"/>
<dbReference type="PRO" id="PR:O97125"/>
<dbReference type="Proteomes" id="UP000000803">
    <property type="component" value="Chromosome 3R"/>
</dbReference>
<dbReference type="Bgee" id="FBgn0001230">
    <property type="expression patterns" value="Expressed in adult class III enteroendocrine cell in adult midgut (Drosophila) and 258 other cell types or tissues"/>
</dbReference>
<dbReference type="GO" id="GO:0005737">
    <property type="term" value="C:cytoplasm"/>
    <property type="evidence" value="ECO:0000318"/>
    <property type="project" value="GO_Central"/>
</dbReference>
<dbReference type="GO" id="GO:0005829">
    <property type="term" value="C:cytosol"/>
    <property type="evidence" value="ECO:0000318"/>
    <property type="project" value="GO_Central"/>
</dbReference>
<dbReference type="GO" id="GO:0005634">
    <property type="term" value="C:nucleus"/>
    <property type="evidence" value="ECO:0000318"/>
    <property type="project" value="GO_Central"/>
</dbReference>
<dbReference type="GO" id="GO:0005886">
    <property type="term" value="C:plasma membrane"/>
    <property type="evidence" value="ECO:0000318"/>
    <property type="project" value="GO_Central"/>
</dbReference>
<dbReference type="GO" id="GO:0005524">
    <property type="term" value="F:ATP binding"/>
    <property type="evidence" value="ECO:0007669"/>
    <property type="project" value="UniProtKB-KW"/>
</dbReference>
<dbReference type="GO" id="GO:0016887">
    <property type="term" value="F:ATP hydrolysis activity"/>
    <property type="evidence" value="ECO:0000318"/>
    <property type="project" value="GO_Central"/>
</dbReference>
<dbReference type="GO" id="GO:0140662">
    <property type="term" value="F:ATP-dependent protein folding chaperone"/>
    <property type="evidence" value="ECO:0007669"/>
    <property type="project" value="InterPro"/>
</dbReference>
<dbReference type="GO" id="GO:0031072">
    <property type="term" value="F:heat shock protein binding"/>
    <property type="evidence" value="ECO:0000318"/>
    <property type="project" value="GO_Central"/>
</dbReference>
<dbReference type="GO" id="GO:0044183">
    <property type="term" value="F:protein folding chaperone"/>
    <property type="evidence" value="ECO:0000318"/>
    <property type="project" value="GO_Central"/>
</dbReference>
<dbReference type="GO" id="GO:0051085">
    <property type="term" value="P:chaperone cofactor-dependent protein refolding"/>
    <property type="evidence" value="ECO:0000318"/>
    <property type="project" value="GO_Central"/>
</dbReference>
<dbReference type="GO" id="GO:0008340">
    <property type="term" value="P:determination of adult lifespan"/>
    <property type="evidence" value="ECO:0000315"/>
    <property type="project" value="FlyBase"/>
</dbReference>
<dbReference type="GO" id="GO:0042026">
    <property type="term" value="P:protein refolding"/>
    <property type="evidence" value="ECO:0000318"/>
    <property type="project" value="GO_Central"/>
</dbReference>
<dbReference type="GO" id="GO:0042594">
    <property type="term" value="P:response to starvation"/>
    <property type="evidence" value="ECO:0000315"/>
    <property type="project" value="FlyBase"/>
</dbReference>
<dbReference type="CDD" id="cd10233">
    <property type="entry name" value="ASKHA_NBD_HSP70_HSPA1"/>
    <property type="match status" value="1"/>
</dbReference>
<dbReference type="FunFam" id="2.60.34.10:FF:000002">
    <property type="entry name" value="Heat shock 70 kDa"/>
    <property type="match status" value="1"/>
</dbReference>
<dbReference type="FunFam" id="3.90.640.10:FF:000002">
    <property type="entry name" value="Heat shock 70 kDa"/>
    <property type="match status" value="1"/>
</dbReference>
<dbReference type="FunFam" id="3.30.420.40:FF:000172">
    <property type="entry name" value="Heat shock 70 kDa protein"/>
    <property type="match status" value="1"/>
</dbReference>
<dbReference type="FunFam" id="3.30.30.30:FF:000001">
    <property type="entry name" value="heat shock 70 kDa protein-like"/>
    <property type="match status" value="1"/>
</dbReference>
<dbReference type="FunFam" id="1.20.1270.10:FF:000024">
    <property type="entry name" value="Heat shock protein 70"/>
    <property type="match status" value="1"/>
</dbReference>
<dbReference type="FunFam" id="3.30.420.40:FF:000026">
    <property type="entry name" value="Heat shock protein 70"/>
    <property type="match status" value="1"/>
</dbReference>
<dbReference type="Gene3D" id="1.20.1270.10">
    <property type="match status" value="1"/>
</dbReference>
<dbReference type="Gene3D" id="3.30.30.30">
    <property type="match status" value="1"/>
</dbReference>
<dbReference type="Gene3D" id="3.30.420.40">
    <property type="match status" value="2"/>
</dbReference>
<dbReference type="Gene3D" id="3.90.640.10">
    <property type="entry name" value="Actin, Chain A, domain 4"/>
    <property type="match status" value="1"/>
</dbReference>
<dbReference type="Gene3D" id="2.60.34.10">
    <property type="entry name" value="Substrate Binding Domain Of DNAk, Chain A, domain 1"/>
    <property type="match status" value="1"/>
</dbReference>
<dbReference type="InterPro" id="IPR043129">
    <property type="entry name" value="ATPase_NBD"/>
</dbReference>
<dbReference type="InterPro" id="IPR018181">
    <property type="entry name" value="Heat_shock_70_CS"/>
</dbReference>
<dbReference type="InterPro" id="IPR029048">
    <property type="entry name" value="HSP70_C_sf"/>
</dbReference>
<dbReference type="InterPro" id="IPR029047">
    <property type="entry name" value="HSP70_peptide-bd_sf"/>
</dbReference>
<dbReference type="InterPro" id="IPR013126">
    <property type="entry name" value="Hsp_70_fam"/>
</dbReference>
<dbReference type="NCBIfam" id="NF001413">
    <property type="entry name" value="PRK00290.1"/>
    <property type="match status" value="1"/>
</dbReference>
<dbReference type="PANTHER" id="PTHR19375">
    <property type="entry name" value="HEAT SHOCK PROTEIN 70KDA"/>
    <property type="match status" value="1"/>
</dbReference>
<dbReference type="Pfam" id="PF00012">
    <property type="entry name" value="HSP70"/>
    <property type="match status" value="1"/>
</dbReference>
<dbReference type="PRINTS" id="PR00301">
    <property type="entry name" value="HEATSHOCK70"/>
</dbReference>
<dbReference type="SUPFAM" id="SSF53067">
    <property type="entry name" value="Actin-like ATPase domain"/>
    <property type="match status" value="2"/>
</dbReference>
<dbReference type="SUPFAM" id="SSF100934">
    <property type="entry name" value="Heat shock protein 70kD (HSP70), C-terminal subdomain"/>
    <property type="match status" value="1"/>
</dbReference>
<dbReference type="SUPFAM" id="SSF100920">
    <property type="entry name" value="Heat shock protein 70kD (HSP70), peptide-binding domain"/>
    <property type="match status" value="1"/>
</dbReference>
<dbReference type="PROSITE" id="PS00297">
    <property type="entry name" value="HSP70_1"/>
    <property type="match status" value="1"/>
</dbReference>
<dbReference type="PROSITE" id="PS00329">
    <property type="entry name" value="HSP70_2"/>
    <property type="match status" value="1"/>
</dbReference>
<proteinExistence type="evidence at protein level"/>
<evidence type="ECO:0000256" key="1">
    <source>
        <dbReference type="SAM" id="MobiDB-lite"/>
    </source>
</evidence>
<evidence type="ECO:0000269" key="2">
    <source>
    </source>
</evidence>
<evidence type="ECO:0000305" key="3"/>
<protein>
    <recommendedName>
        <fullName>Heat shock protein 68</fullName>
    </recommendedName>
</protein>
<gene>
    <name type="primary">Hsp68</name>
    <name type="ORF">CG5436</name>
</gene>
<organism>
    <name type="scientific">Drosophila melanogaster</name>
    <name type="common">Fruit fly</name>
    <dbReference type="NCBI Taxonomy" id="7227"/>
    <lineage>
        <taxon>Eukaryota</taxon>
        <taxon>Metazoa</taxon>
        <taxon>Ecdysozoa</taxon>
        <taxon>Arthropoda</taxon>
        <taxon>Hexapoda</taxon>
        <taxon>Insecta</taxon>
        <taxon>Pterygota</taxon>
        <taxon>Neoptera</taxon>
        <taxon>Endopterygota</taxon>
        <taxon>Diptera</taxon>
        <taxon>Brachycera</taxon>
        <taxon>Muscomorpha</taxon>
        <taxon>Ephydroidea</taxon>
        <taxon>Drosophilidae</taxon>
        <taxon>Drosophila</taxon>
        <taxon>Sophophora</taxon>
    </lineage>
</organism>
<feature type="chain" id="PRO_0000078328" description="Heat shock protein 68">
    <location>
        <begin position="1"/>
        <end position="635"/>
    </location>
</feature>
<feature type="region of interest" description="Disordered" evidence="1">
    <location>
        <begin position="606"/>
        <end position="635"/>
    </location>
</feature>
<feature type="modified residue" description="Phosphothreonine" evidence="2">
    <location>
        <position position="127"/>
    </location>
</feature>